<keyword id="KW-0028">Amino-acid biosynthesis</keyword>
<keyword id="KW-0963">Cytoplasm</keyword>
<keyword id="KW-0521">NADP</keyword>
<keyword id="KW-0560">Oxidoreductase</keyword>
<keyword id="KW-0641">Proline biosynthesis</keyword>
<keyword id="KW-1185">Reference proteome</keyword>
<organism>
    <name type="scientific">Aromatoleum aromaticum (strain DSM 19018 / LMG 30748 / EbN1)</name>
    <name type="common">Azoarcus sp. (strain EbN1)</name>
    <dbReference type="NCBI Taxonomy" id="76114"/>
    <lineage>
        <taxon>Bacteria</taxon>
        <taxon>Pseudomonadati</taxon>
        <taxon>Pseudomonadota</taxon>
        <taxon>Betaproteobacteria</taxon>
        <taxon>Rhodocyclales</taxon>
        <taxon>Rhodocyclaceae</taxon>
        <taxon>Aromatoleum</taxon>
    </lineage>
</organism>
<dbReference type="EC" id="1.2.1.41" evidence="1"/>
<dbReference type="EMBL" id="CR555306">
    <property type="protein sequence ID" value="CAI08609.1"/>
    <property type="molecule type" value="Genomic_DNA"/>
</dbReference>
<dbReference type="RefSeq" id="WP_011238295.1">
    <property type="nucleotide sequence ID" value="NC_006513.1"/>
</dbReference>
<dbReference type="SMR" id="Q5P255"/>
<dbReference type="STRING" id="76114.ebA4380"/>
<dbReference type="KEGG" id="eba:ebA4380"/>
<dbReference type="eggNOG" id="COG0014">
    <property type="taxonomic scope" value="Bacteria"/>
</dbReference>
<dbReference type="HOGENOM" id="CLU_030231_0_0_4"/>
<dbReference type="OrthoDB" id="9809970at2"/>
<dbReference type="UniPathway" id="UPA00098">
    <property type="reaction ID" value="UER00360"/>
</dbReference>
<dbReference type="Proteomes" id="UP000006552">
    <property type="component" value="Chromosome"/>
</dbReference>
<dbReference type="GO" id="GO:0005737">
    <property type="term" value="C:cytoplasm"/>
    <property type="evidence" value="ECO:0007669"/>
    <property type="project" value="UniProtKB-SubCell"/>
</dbReference>
<dbReference type="GO" id="GO:0004350">
    <property type="term" value="F:glutamate-5-semialdehyde dehydrogenase activity"/>
    <property type="evidence" value="ECO:0007669"/>
    <property type="project" value="UniProtKB-UniRule"/>
</dbReference>
<dbReference type="GO" id="GO:0050661">
    <property type="term" value="F:NADP binding"/>
    <property type="evidence" value="ECO:0007669"/>
    <property type="project" value="InterPro"/>
</dbReference>
<dbReference type="GO" id="GO:0055129">
    <property type="term" value="P:L-proline biosynthetic process"/>
    <property type="evidence" value="ECO:0007669"/>
    <property type="project" value="UniProtKB-UniRule"/>
</dbReference>
<dbReference type="CDD" id="cd07079">
    <property type="entry name" value="ALDH_F18-19_ProA-GPR"/>
    <property type="match status" value="1"/>
</dbReference>
<dbReference type="FunFam" id="3.40.309.10:FF:000006">
    <property type="entry name" value="Gamma-glutamyl phosphate reductase"/>
    <property type="match status" value="1"/>
</dbReference>
<dbReference type="Gene3D" id="3.40.605.10">
    <property type="entry name" value="Aldehyde Dehydrogenase, Chain A, domain 1"/>
    <property type="match status" value="1"/>
</dbReference>
<dbReference type="Gene3D" id="3.40.309.10">
    <property type="entry name" value="Aldehyde Dehydrogenase, Chain A, domain 2"/>
    <property type="match status" value="1"/>
</dbReference>
<dbReference type="HAMAP" id="MF_00412">
    <property type="entry name" value="ProA"/>
    <property type="match status" value="1"/>
</dbReference>
<dbReference type="InterPro" id="IPR016161">
    <property type="entry name" value="Ald_DH/histidinol_DH"/>
</dbReference>
<dbReference type="InterPro" id="IPR016163">
    <property type="entry name" value="Ald_DH_C"/>
</dbReference>
<dbReference type="InterPro" id="IPR016162">
    <property type="entry name" value="Ald_DH_N"/>
</dbReference>
<dbReference type="InterPro" id="IPR015590">
    <property type="entry name" value="Aldehyde_DH_dom"/>
</dbReference>
<dbReference type="InterPro" id="IPR020593">
    <property type="entry name" value="G-glutamylP_reductase_CS"/>
</dbReference>
<dbReference type="InterPro" id="IPR012134">
    <property type="entry name" value="Glu-5-SA_DH"/>
</dbReference>
<dbReference type="InterPro" id="IPR000965">
    <property type="entry name" value="GPR_dom"/>
</dbReference>
<dbReference type="NCBIfam" id="NF001221">
    <property type="entry name" value="PRK00197.1"/>
    <property type="match status" value="1"/>
</dbReference>
<dbReference type="NCBIfam" id="TIGR00407">
    <property type="entry name" value="proA"/>
    <property type="match status" value="1"/>
</dbReference>
<dbReference type="PANTHER" id="PTHR11063:SF8">
    <property type="entry name" value="DELTA-1-PYRROLINE-5-CARBOXYLATE SYNTHASE"/>
    <property type="match status" value="1"/>
</dbReference>
<dbReference type="PANTHER" id="PTHR11063">
    <property type="entry name" value="GLUTAMATE SEMIALDEHYDE DEHYDROGENASE"/>
    <property type="match status" value="1"/>
</dbReference>
<dbReference type="Pfam" id="PF00171">
    <property type="entry name" value="Aldedh"/>
    <property type="match status" value="2"/>
</dbReference>
<dbReference type="PIRSF" id="PIRSF000151">
    <property type="entry name" value="GPR"/>
    <property type="match status" value="1"/>
</dbReference>
<dbReference type="SUPFAM" id="SSF53720">
    <property type="entry name" value="ALDH-like"/>
    <property type="match status" value="1"/>
</dbReference>
<dbReference type="PROSITE" id="PS01223">
    <property type="entry name" value="PROA"/>
    <property type="match status" value="1"/>
</dbReference>
<gene>
    <name evidence="1" type="primary">proA</name>
    <name type="ordered locus">AZOSEA24840</name>
    <name type="ORF">ebA4380</name>
</gene>
<evidence type="ECO:0000255" key="1">
    <source>
        <dbReference type="HAMAP-Rule" id="MF_00412"/>
    </source>
</evidence>
<reference key="1">
    <citation type="journal article" date="2005" name="Arch. Microbiol.">
        <title>The genome sequence of an anaerobic aromatic-degrading denitrifying bacterium, strain EbN1.</title>
        <authorList>
            <person name="Rabus R."/>
            <person name="Kube M."/>
            <person name="Heider J."/>
            <person name="Beck A."/>
            <person name="Heitmann K."/>
            <person name="Widdel F."/>
            <person name="Reinhardt R."/>
        </authorList>
    </citation>
    <scope>NUCLEOTIDE SEQUENCE [LARGE SCALE GENOMIC DNA]</scope>
    <source>
        <strain>DSM 19018 / LMG 30748 / EbN1</strain>
    </source>
</reference>
<feature type="chain" id="PRO_0000189685" description="Gamma-glutamyl phosphate reductase">
    <location>
        <begin position="1"/>
        <end position="425"/>
    </location>
</feature>
<sequence length="425" mass="45075">MDIHDYMQTLGRQARAASRVLATASTADKNAALVAMAAAIREQTGELLAANARDLDEARAAGLEAALIDRLTLTAKGIEAMAEGLEQVAGLPDPIGEITDVKRRPSGIQVGKMRVPLGVIGIIYEARPNVTADAAALCLKSGNAAILRGGKEALHCNQAIAQCVRTGLAAAGLPETSVQVVETTDRAAVGHLITMPEFVDVIVPRGGKGLIERISKEARVPVIKHLDGNCHVYIDRDADVAKVVPIVENAKTQRYGTCNTAESLLVAREVAPRLLPEIGRMLATKGVEMRGCEQSLAILRAAGIAADKLRAASEQDWSEEYLAPVIAVKVVADLDEAIAHINTYSSGHTEAIVTENYTSAMRFLREVDSSSVMVNASTRFADGFEYGLGAEIGISTDKIHARGPVGLDGLTSQKWIVFGNGEIRG</sequence>
<accession>Q5P255</accession>
<proteinExistence type="inferred from homology"/>
<protein>
    <recommendedName>
        <fullName evidence="1">Gamma-glutamyl phosphate reductase</fullName>
        <shortName evidence="1">GPR</shortName>
        <ecNumber evidence="1">1.2.1.41</ecNumber>
    </recommendedName>
    <alternativeName>
        <fullName evidence="1">Glutamate-5-semialdehyde dehydrogenase</fullName>
    </alternativeName>
    <alternativeName>
        <fullName evidence="1">Glutamyl-gamma-semialdehyde dehydrogenase</fullName>
        <shortName evidence="1">GSA dehydrogenase</shortName>
    </alternativeName>
</protein>
<comment type="function">
    <text evidence="1">Catalyzes the NADPH-dependent reduction of L-glutamate 5-phosphate into L-glutamate 5-semialdehyde and phosphate. The product spontaneously undergoes cyclization to form 1-pyrroline-5-carboxylate.</text>
</comment>
<comment type="catalytic activity">
    <reaction evidence="1">
        <text>L-glutamate 5-semialdehyde + phosphate + NADP(+) = L-glutamyl 5-phosphate + NADPH + H(+)</text>
        <dbReference type="Rhea" id="RHEA:19541"/>
        <dbReference type="ChEBI" id="CHEBI:15378"/>
        <dbReference type="ChEBI" id="CHEBI:43474"/>
        <dbReference type="ChEBI" id="CHEBI:57783"/>
        <dbReference type="ChEBI" id="CHEBI:58066"/>
        <dbReference type="ChEBI" id="CHEBI:58274"/>
        <dbReference type="ChEBI" id="CHEBI:58349"/>
        <dbReference type="EC" id="1.2.1.41"/>
    </reaction>
</comment>
<comment type="pathway">
    <text evidence="1">Amino-acid biosynthesis; L-proline biosynthesis; L-glutamate 5-semialdehyde from L-glutamate: step 2/2.</text>
</comment>
<comment type="subcellular location">
    <subcellularLocation>
        <location evidence="1">Cytoplasm</location>
    </subcellularLocation>
</comment>
<comment type="similarity">
    <text evidence="1">Belongs to the gamma-glutamyl phosphate reductase family.</text>
</comment>
<name>PROA_AROAE</name>